<keyword id="KW-0413">Isomerase</keyword>
<keyword id="KW-0423">Lactose metabolism</keyword>
<keyword id="KW-1185">Reference proteome</keyword>
<sequence>MVISIGCDHIVPDIKMKISEYLKSKGHTVIDNGTYDFVRTHYPIFGKAAAEKVASGEADLGVILCGTGVGISNSANKVKGIRAALVRDVGTARYAKEYLNANVIAVGGRITGIGLIENIIDVFLEAKYKPTKENQEIIKGIDELIENDKGQFGNEHFFDEFIEKWDNGGYPKE</sequence>
<proteinExistence type="inferred from homology"/>
<evidence type="ECO:0000255" key="1">
    <source>
        <dbReference type="HAMAP-Rule" id="MF_01556"/>
    </source>
</evidence>
<organism>
    <name type="scientific">Clostridium acetobutylicum (strain ATCC 824 / DSM 792 / JCM 1419 / IAM 19013 / LMG 5710 / NBRC 13948 / NRRL B-527 / VKM B-1787 / 2291 / W)</name>
    <dbReference type="NCBI Taxonomy" id="272562"/>
    <lineage>
        <taxon>Bacteria</taxon>
        <taxon>Bacillati</taxon>
        <taxon>Bacillota</taxon>
        <taxon>Clostridia</taxon>
        <taxon>Eubacteriales</taxon>
        <taxon>Clostridiaceae</taxon>
        <taxon>Clostridium</taxon>
    </lineage>
</organism>
<comment type="catalytic activity">
    <reaction evidence="1">
        <text>aldehydo-D-galactose 6-phosphate = keto-D-tagatose 6-phosphate</text>
        <dbReference type="Rhea" id="RHEA:13033"/>
        <dbReference type="ChEBI" id="CHEBI:58255"/>
        <dbReference type="ChEBI" id="CHEBI:134283"/>
        <dbReference type="EC" id="5.3.1.26"/>
    </reaction>
</comment>
<comment type="pathway">
    <text evidence="1">Carbohydrate metabolism; D-galactose 6-phosphate degradation; D-tagatose 6-phosphate from D-galactose 6-phosphate: step 1/1.</text>
</comment>
<comment type="subunit">
    <text evidence="1">Heteromultimeric protein consisting of LacA and LacB.</text>
</comment>
<comment type="similarity">
    <text evidence="1">Belongs to the LacAB/RpiB family.</text>
</comment>
<name>LACB_CLOAB</name>
<reference key="1">
    <citation type="journal article" date="2001" name="J. Bacteriol.">
        <title>Genome sequence and comparative analysis of the solvent-producing bacterium Clostridium acetobutylicum.</title>
        <authorList>
            <person name="Noelling J."/>
            <person name="Breton G."/>
            <person name="Omelchenko M.V."/>
            <person name="Makarova K.S."/>
            <person name="Zeng Q."/>
            <person name="Gibson R."/>
            <person name="Lee H.M."/>
            <person name="Dubois J."/>
            <person name="Qiu D."/>
            <person name="Hitti J."/>
            <person name="Wolf Y.I."/>
            <person name="Tatusov R.L."/>
            <person name="Sabathe F."/>
            <person name="Doucette-Stamm L.A."/>
            <person name="Soucaille P."/>
            <person name="Daly M.J."/>
            <person name="Bennett G.N."/>
            <person name="Koonin E.V."/>
            <person name="Smith D.R."/>
        </authorList>
    </citation>
    <scope>NUCLEOTIDE SEQUENCE [LARGE SCALE GENOMIC DNA]</scope>
    <source>
        <strain>ATCC 824 / DSM 792 / JCM 1419 / IAM 19013 / LMG 5710 / NBRC 13948 / NRRL B-527 / VKM B-1787 / 2291 / W</strain>
    </source>
</reference>
<gene>
    <name evidence="1" type="primary">lacB</name>
    <name type="ordered locus">CA_C2953</name>
</gene>
<dbReference type="EC" id="5.3.1.26" evidence="1"/>
<dbReference type="EMBL" id="AE001437">
    <property type="protein sequence ID" value="AAK80895.1"/>
    <property type="molecule type" value="Genomic_DNA"/>
</dbReference>
<dbReference type="PIR" id="D97263">
    <property type="entry name" value="D97263"/>
</dbReference>
<dbReference type="RefSeq" id="NP_349555.1">
    <property type="nucleotide sequence ID" value="NC_003030.1"/>
</dbReference>
<dbReference type="RefSeq" id="WP_010966236.1">
    <property type="nucleotide sequence ID" value="NC_003030.1"/>
</dbReference>
<dbReference type="SMR" id="Q97F02"/>
<dbReference type="STRING" id="272562.CA_C2953"/>
<dbReference type="GeneID" id="44999441"/>
<dbReference type="KEGG" id="cac:CA_C2953"/>
<dbReference type="PATRIC" id="fig|272562.8.peg.3137"/>
<dbReference type="eggNOG" id="COG0698">
    <property type="taxonomic scope" value="Bacteria"/>
</dbReference>
<dbReference type="HOGENOM" id="CLU_091396_2_0_9"/>
<dbReference type="OrthoDB" id="1778624at2"/>
<dbReference type="UniPathway" id="UPA00702">
    <property type="reaction ID" value="UER00714"/>
</dbReference>
<dbReference type="Proteomes" id="UP000000814">
    <property type="component" value="Chromosome"/>
</dbReference>
<dbReference type="GO" id="GO:0050044">
    <property type="term" value="F:galactose-6-phosphate isomerase activity"/>
    <property type="evidence" value="ECO:0007669"/>
    <property type="project" value="UniProtKB-UniRule"/>
</dbReference>
<dbReference type="GO" id="GO:0004751">
    <property type="term" value="F:ribose-5-phosphate isomerase activity"/>
    <property type="evidence" value="ECO:0007669"/>
    <property type="project" value="TreeGrafter"/>
</dbReference>
<dbReference type="GO" id="GO:0019316">
    <property type="term" value="P:D-allose catabolic process"/>
    <property type="evidence" value="ECO:0007669"/>
    <property type="project" value="TreeGrafter"/>
</dbReference>
<dbReference type="GO" id="GO:0019388">
    <property type="term" value="P:galactose catabolic process"/>
    <property type="evidence" value="ECO:0007669"/>
    <property type="project" value="UniProtKB-UniPathway"/>
</dbReference>
<dbReference type="GO" id="GO:0019512">
    <property type="term" value="P:lactose catabolic process via tagatose-6-phosphate"/>
    <property type="evidence" value="ECO:0007669"/>
    <property type="project" value="UniProtKB-UniRule"/>
</dbReference>
<dbReference type="GO" id="GO:0009052">
    <property type="term" value="P:pentose-phosphate shunt, non-oxidative branch"/>
    <property type="evidence" value="ECO:0007669"/>
    <property type="project" value="TreeGrafter"/>
</dbReference>
<dbReference type="Gene3D" id="3.40.1400.10">
    <property type="entry name" value="Sugar-phosphate isomerase, RpiB/LacA/LacB"/>
    <property type="match status" value="1"/>
</dbReference>
<dbReference type="HAMAP" id="MF_01556">
    <property type="entry name" value="LacB"/>
    <property type="match status" value="1"/>
</dbReference>
<dbReference type="InterPro" id="IPR004784">
    <property type="entry name" value="LacB"/>
</dbReference>
<dbReference type="InterPro" id="IPR003500">
    <property type="entry name" value="RpiB_LacA_LacB"/>
</dbReference>
<dbReference type="InterPro" id="IPR036569">
    <property type="entry name" value="RpiB_LacA_LacB_sf"/>
</dbReference>
<dbReference type="NCBIfam" id="NF004051">
    <property type="entry name" value="PRK05571.1"/>
    <property type="match status" value="1"/>
</dbReference>
<dbReference type="NCBIfam" id="NF006381">
    <property type="entry name" value="PRK08622.1"/>
    <property type="match status" value="1"/>
</dbReference>
<dbReference type="NCBIfam" id="TIGR00689">
    <property type="entry name" value="rpiB_lacA_lacB"/>
    <property type="match status" value="1"/>
</dbReference>
<dbReference type="PANTHER" id="PTHR30345:SF0">
    <property type="entry name" value="DNA DAMAGE-REPAIR_TOLERATION PROTEIN DRT102"/>
    <property type="match status" value="1"/>
</dbReference>
<dbReference type="PANTHER" id="PTHR30345">
    <property type="entry name" value="RIBOSE-5-PHOSPHATE ISOMERASE B"/>
    <property type="match status" value="1"/>
</dbReference>
<dbReference type="Pfam" id="PF02502">
    <property type="entry name" value="LacAB_rpiB"/>
    <property type="match status" value="1"/>
</dbReference>
<dbReference type="PIRSF" id="PIRSF005384">
    <property type="entry name" value="RpiB_LacA_B"/>
    <property type="match status" value="1"/>
</dbReference>
<dbReference type="SUPFAM" id="SSF89623">
    <property type="entry name" value="Ribose/Galactose isomerase RpiB/AlsB"/>
    <property type="match status" value="1"/>
</dbReference>
<feature type="chain" id="PRO_0000208132" description="Galactose-6-phosphate isomerase subunit LacB">
    <location>
        <begin position="1"/>
        <end position="173"/>
    </location>
</feature>
<protein>
    <recommendedName>
        <fullName evidence="1">Galactose-6-phosphate isomerase subunit LacB</fullName>
        <ecNumber evidence="1">5.3.1.26</ecNumber>
    </recommendedName>
</protein>
<accession>Q97F02</accession>